<protein>
    <recommendedName>
        <fullName evidence="2">Acetyl-coenzyme A carboxylase carboxyl transferase subunit beta, chloroplastic</fullName>
        <shortName evidence="2">ACCase subunit beta</shortName>
        <shortName evidence="2">Acetyl-CoA carboxylase carboxyltransferase subunit beta</shortName>
        <ecNumber evidence="2">2.1.3.15</ecNumber>
    </recommendedName>
</protein>
<comment type="function">
    <text evidence="2">Component of the acetyl coenzyme A carboxylase (ACC) complex. Biotin carboxylase (BC) catalyzes the carboxylation of biotin on its carrier protein (BCCP) and then the CO(2) group is transferred by the transcarboxylase to acetyl-CoA to form malonyl-CoA.</text>
</comment>
<comment type="catalytic activity">
    <reaction evidence="2">
        <text>N(6)-carboxybiotinyl-L-lysyl-[protein] + acetyl-CoA = N(6)-biotinyl-L-lysyl-[protein] + malonyl-CoA</text>
        <dbReference type="Rhea" id="RHEA:54728"/>
        <dbReference type="Rhea" id="RHEA-COMP:10505"/>
        <dbReference type="Rhea" id="RHEA-COMP:10506"/>
        <dbReference type="ChEBI" id="CHEBI:57288"/>
        <dbReference type="ChEBI" id="CHEBI:57384"/>
        <dbReference type="ChEBI" id="CHEBI:83144"/>
        <dbReference type="ChEBI" id="CHEBI:83145"/>
        <dbReference type="EC" id="2.1.3.15"/>
    </reaction>
</comment>
<comment type="cofactor">
    <cofactor evidence="2">
        <name>Zn(2+)</name>
        <dbReference type="ChEBI" id="CHEBI:29105"/>
    </cofactor>
    <text evidence="2">Binds 1 zinc ion per subunit.</text>
</comment>
<comment type="pathway">
    <text evidence="2">Lipid metabolism; malonyl-CoA biosynthesis; malonyl-CoA from acetyl-CoA: step 1/1.</text>
</comment>
<comment type="subunit">
    <text evidence="1">Acetyl-CoA carboxylase is a heterohexamer composed of biotin carboxyl carrier protein, biotin carboxylase and 2 subunits each of ACCase subunit alpha and ACCase plastid-coded subunit beta (accD).</text>
</comment>
<comment type="subcellular location">
    <subcellularLocation>
        <location evidence="2">Plastid</location>
        <location evidence="2">Chloroplast stroma</location>
    </subcellularLocation>
</comment>
<comment type="similarity">
    <text evidence="2">Belongs to the AccD/PCCB family.</text>
</comment>
<feature type="chain" id="PRO_0000199791" description="Acetyl-coenzyme A carboxylase carboxyl transferase subunit beta, chloroplastic">
    <location>
        <begin position="1"/>
        <end position="319"/>
    </location>
</feature>
<feature type="domain" description="CoA carboxyltransferase N-terminal" evidence="3">
    <location>
        <begin position="47"/>
        <end position="319"/>
    </location>
</feature>
<feature type="zinc finger region" description="C4-type" evidence="2">
    <location>
        <begin position="51"/>
        <end position="73"/>
    </location>
</feature>
<feature type="binding site" evidence="2">
    <location>
        <position position="51"/>
    </location>
    <ligand>
        <name>Zn(2+)</name>
        <dbReference type="ChEBI" id="CHEBI:29105"/>
    </ligand>
</feature>
<feature type="binding site" evidence="2">
    <location>
        <position position="54"/>
    </location>
    <ligand>
        <name>Zn(2+)</name>
        <dbReference type="ChEBI" id="CHEBI:29105"/>
    </ligand>
</feature>
<feature type="binding site" evidence="2">
    <location>
        <position position="70"/>
    </location>
    <ligand>
        <name>Zn(2+)</name>
        <dbReference type="ChEBI" id="CHEBI:29105"/>
    </ligand>
</feature>
<feature type="binding site" evidence="2">
    <location>
        <position position="73"/>
    </location>
    <ligand>
        <name>Zn(2+)</name>
        <dbReference type="ChEBI" id="CHEBI:29105"/>
    </ligand>
</feature>
<sequence>MSIREWFEDRRKITGLLKNSVERDSKDVNEMERNKNLSIDYVKINRLWVQCDNCESLLYIRFLRENKSVCEECGYYLQMNSSDRIELLIDRGTRHPMDEDMYTLDVLQFHSENEPAHSDPLHSEDESYKDHITFCQIETGLTDAIQTGIGQLNGLPIALGVMDFKFMGGSMGSVVGEKITRLIERATEESLPVIMVCASGGARMQEGSFSSMQMAKIASALYIPQKDNRLLYVSILTSPTTGGVTASFGMLGDIIIAEPKAYIAFAGKIVIDQTLGQKVIEDFQVTEHLFGHGLFDLIVPRNLLKCVLSELFYVLQSSS</sequence>
<reference key="1">
    <citation type="submission" date="1997-08" db="EMBL/GenBank/DDBJ databases">
        <title>Picea abies chloroplast genome fragment of 8,7 kb including atpE, atpB, rbcL, trnR, accD, and psaI.</title>
        <authorList>
            <person name="Sutter A."/>
            <person name="Philipps A."/>
            <person name="Wild A."/>
        </authorList>
    </citation>
    <scope>NUCLEOTIDE SEQUENCE [GENOMIC DNA]</scope>
</reference>
<evidence type="ECO:0000250" key="1"/>
<evidence type="ECO:0000255" key="2">
    <source>
        <dbReference type="HAMAP-Rule" id="MF_01395"/>
    </source>
</evidence>
<evidence type="ECO:0000255" key="3">
    <source>
        <dbReference type="PROSITE-ProRule" id="PRU01136"/>
    </source>
</evidence>
<proteinExistence type="inferred from homology"/>
<dbReference type="EC" id="2.1.3.15" evidence="2"/>
<dbReference type="EMBL" id="AJ001004">
    <property type="protein sequence ID" value="CAA04460.1"/>
    <property type="molecule type" value="Genomic_DNA"/>
</dbReference>
<dbReference type="PIR" id="T14831">
    <property type="entry name" value="T14831"/>
</dbReference>
<dbReference type="SMR" id="O47039"/>
<dbReference type="UniPathway" id="UPA00655">
    <property type="reaction ID" value="UER00711"/>
</dbReference>
<dbReference type="GO" id="GO:0009317">
    <property type="term" value="C:acetyl-CoA carboxylase complex"/>
    <property type="evidence" value="ECO:0007669"/>
    <property type="project" value="InterPro"/>
</dbReference>
<dbReference type="GO" id="GO:0009570">
    <property type="term" value="C:chloroplast stroma"/>
    <property type="evidence" value="ECO:0007669"/>
    <property type="project" value="UniProtKB-SubCell"/>
</dbReference>
<dbReference type="GO" id="GO:0003989">
    <property type="term" value="F:acetyl-CoA carboxylase activity"/>
    <property type="evidence" value="ECO:0007669"/>
    <property type="project" value="InterPro"/>
</dbReference>
<dbReference type="GO" id="GO:0005524">
    <property type="term" value="F:ATP binding"/>
    <property type="evidence" value="ECO:0007669"/>
    <property type="project" value="UniProtKB-KW"/>
</dbReference>
<dbReference type="GO" id="GO:0016743">
    <property type="term" value="F:carboxyl- or carbamoyltransferase activity"/>
    <property type="evidence" value="ECO:0007669"/>
    <property type="project" value="UniProtKB-UniRule"/>
</dbReference>
<dbReference type="GO" id="GO:0008270">
    <property type="term" value="F:zinc ion binding"/>
    <property type="evidence" value="ECO:0007669"/>
    <property type="project" value="UniProtKB-UniRule"/>
</dbReference>
<dbReference type="GO" id="GO:0006633">
    <property type="term" value="P:fatty acid biosynthetic process"/>
    <property type="evidence" value="ECO:0007669"/>
    <property type="project" value="UniProtKB-KW"/>
</dbReference>
<dbReference type="GO" id="GO:2001295">
    <property type="term" value="P:malonyl-CoA biosynthetic process"/>
    <property type="evidence" value="ECO:0007669"/>
    <property type="project" value="UniProtKB-UniRule"/>
</dbReference>
<dbReference type="Gene3D" id="3.90.226.10">
    <property type="entry name" value="2-enoyl-CoA Hydratase, Chain A, domain 1"/>
    <property type="match status" value="1"/>
</dbReference>
<dbReference type="HAMAP" id="MF_01395">
    <property type="entry name" value="AcetylCoA_CT_beta"/>
    <property type="match status" value="1"/>
</dbReference>
<dbReference type="InterPro" id="IPR034733">
    <property type="entry name" value="AcCoA_carboxyl_beta"/>
</dbReference>
<dbReference type="InterPro" id="IPR000438">
    <property type="entry name" value="Acetyl_CoA_COase_Trfase_b_su"/>
</dbReference>
<dbReference type="InterPro" id="IPR029045">
    <property type="entry name" value="ClpP/crotonase-like_dom_sf"/>
</dbReference>
<dbReference type="InterPro" id="IPR011762">
    <property type="entry name" value="COA_CT_N"/>
</dbReference>
<dbReference type="PANTHER" id="PTHR42995">
    <property type="entry name" value="ACETYL-COENZYME A CARBOXYLASE CARBOXYL TRANSFERASE SUBUNIT BETA, CHLOROPLASTIC"/>
    <property type="match status" value="1"/>
</dbReference>
<dbReference type="PANTHER" id="PTHR42995:SF5">
    <property type="entry name" value="ACETYL-COENZYME A CARBOXYLASE CARBOXYL TRANSFERASE SUBUNIT BETA, CHLOROPLASTIC"/>
    <property type="match status" value="1"/>
</dbReference>
<dbReference type="Pfam" id="PF01039">
    <property type="entry name" value="Carboxyl_trans"/>
    <property type="match status" value="1"/>
</dbReference>
<dbReference type="PRINTS" id="PR01070">
    <property type="entry name" value="ACCCTRFRASEB"/>
</dbReference>
<dbReference type="SUPFAM" id="SSF52096">
    <property type="entry name" value="ClpP/crotonase"/>
    <property type="match status" value="1"/>
</dbReference>
<dbReference type="PROSITE" id="PS50980">
    <property type="entry name" value="COA_CT_NTER"/>
    <property type="match status" value="1"/>
</dbReference>
<keyword id="KW-0067">ATP-binding</keyword>
<keyword id="KW-0150">Chloroplast</keyword>
<keyword id="KW-0275">Fatty acid biosynthesis</keyword>
<keyword id="KW-0276">Fatty acid metabolism</keyword>
<keyword id="KW-0444">Lipid biosynthesis</keyword>
<keyword id="KW-0443">Lipid metabolism</keyword>
<keyword id="KW-0479">Metal-binding</keyword>
<keyword id="KW-0547">Nucleotide-binding</keyword>
<keyword id="KW-0934">Plastid</keyword>
<keyword id="KW-0808">Transferase</keyword>
<keyword id="KW-0862">Zinc</keyword>
<keyword id="KW-0863">Zinc-finger</keyword>
<organism>
    <name type="scientific">Picea abies</name>
    <name type="common">Norway spruce</name>
    <name type="synonym">Picea excelsa</name>
    <dbReference type="NCBI Taxonomy" id="3329"/>
    <lineage>
        <taxon>Eukaryota</taxon>
        <taxon>Viridiplantae</taxon>
        <taxon>Streptophyta</taxon>
        <taxon>Embryophyta</taxon>
        <taxon>Tracheophyta</taxon>
        <taxon>Spermatophyta</taxon>
        <taxon>Pinopsida</taxon>
        <taxon>Pinidae</taxon>
        <taxon>Conifers I</taxon>
        <taxon>Pinales</taxon>
        <taxon>Pinaceae</taxon>
        <taxon>Picea</taxon>
    </lineage>
</organism>
<name>ACCD_PICAB</name>
<gene>
    <name evidence="2" type="primary">accD</name>
</gene>
<geneLocation type="chloroplast"/>
<accession>O47039</accession>